<feature type="chain" id="PRO_0000071106" description="Mitochondrial import inner membrane translocase subunit TIM14">
    <location>
        <begin position="1"/>
        <end position="118"/>
    </location>
</feature>
<feature type="topological domain" description="Mitochondrial intermembrane" evidence="2">
    <location>
        <begin position="1"/>
        <end position="4"/>
    </location>
</feature>
<feature type="transmembrane region" description="Helical" evidence="2">
    <location>
        <begin position="5"/>
        <end position="22"/>
    </location>
</feature>
<feature type="topological domain" description="Mitochondrial matrix" evidence="2">
    <location>
        <begin position="23"/>
        <end position="118"/>
    </location>
</feature>
<feature type="domain" description="J" evidence="3">
    <location>
        <begin position="66"/>
        <end position="118"/>
    </location>
</feature>
<proteinExistence type="inferred from homology"/>
<reference key="1">
    <citation type="journal article" date="2000" name="Science">
        <title>The genome sequence of Drosophila melanogaster.</title>
        <authorList>
            <person name="Adams M.D."/>
            <person name="Celniker S.E."/>
            <person name="Holt R.A."/>
            <person name="Evans C.A."/>
            <person name="Gocayne J.D."/>
            <person name="Amanatides P.G."/>
            <person name="Scherer S.E."/>
            <person name="Li P.W."/>
            <person name="Hoskins R.A."/>
            <person name="Galle R.F."/>
            <person name="George R.A."/>
            <person name="Lewis S.E."/>
            <person name="Richards S."/>
            <person name="Ashburner M."/>
            <person name="Henderson S.N."/>
            <person name="Sutton G.G."/>
            <person name="Wortman J.R."/>
            <person name="Yandell M.D."/>
            <person name="Zhang Q."/>
            <person name="Chen L.X."/>
            <person name="Brandon R.C."/>
            <person name="Rogers Y.-H.C."/>
            <person name="Blazej R.G."/>
            <person name="Champe M."/>
            <person name="Pfeiffer B.D."/>
            <person name="Wan K.H."/>
            <person name="Doyle C."/>
            <person name="Baxter E.G."/>
            <person name="Helt G."/>
            <person name="Nelson C.R."/>
            <person name="Miklos G.L.G."/>
            <person name="Abril J.F."/>
            <person name="Agbayani A."/>
            <person name="An H.-J."/>
            <person name="Andrews-Pfannkoch C."/>
            <person name="Baldwin D."/>
            <person name="Ballew R.M."/>
            <person name="Basu A."/>
            <person name="Baxendale J."/>
            <person name="Bayraktaroglu L."/>
            <person name="Beasley E.M."/>
            <person name="Beeson K.Y."/>
            <person name="Benos P.V."/>
            <person name="Berman B.P."/>
            <person name="Bhandari D."/>
            <person name="Bolshakov S."/>
            <person name="Borkova D."/>
            <person name="Botchan M.R."/>
            <person name="Bouck J."/>
            <person name="Brokstein P."/>
            <person name="Brottier P."/>
            <person name="Burtis K.C."/>
            <person name="Busam D.A."/>
            <person name="Butler H."/>
            <person name="Cadieu E."/>
            <person name="Center A."/>
            <person name="Chandra I."/>
            <person name="Cherry J.M."/>
            <person name="Cawley S."/>
            <person name="Dahlke C."/>
            <person name="Davenport L.B."/>
            <person name="Davies P."/>
            <person name="de Pablos B."/>
            <person name="Delcher A."/>
            <person name="Deng Z."/>
            <person name="Mays A.D."/>
            <person name="Dew I."/>
            <person name="Dietz S.M."/>
            <person name="Dodson K."/>
            <person name="Doup L.E."/>
            <person name="Downes M."/>
            <person name="Dugan-Rocha S."/>
            <person name="Dunkov B.C."/>
            <person name="Dunn P."/>
            <person name="Durbin K.J."/>
            <person name="Evangelista C.C."/>
            <person name="Ferraz C."/>
            <person name="Ferriera S."/>
            <person name="Fleischmann W."/>
            <person name="Fosler C."/>
            <person name="Gabrielian A.E."/>
            <person name="Garg N.S."/>
            <person name="Gelbart W.M."/>
            <person name="Glasser K."/>
            <person name="Glodek A."/>
            <person name="Gong F."/>
            <person name="Gorrell J.H."/>
            <person name="Gu Z."/>
            <person name="Guan P."/>
            <person name="Harris M."/>
            <person name="Harris N.L."/>
            <person name="Harvey D.A."/>
            <person name="Heiman T.J."/>
            <person name="Hernandez J.R."/>
            <person name="Houck J."/>
            <person name="Hostin D."/>
            <person name="Houston K.A."/>
            <person name="Howland T.J."/>
            <person name="Wei M.-H."/>
            <person name="Ibegwam C."/>
            <person name="Jalali M."/>
            <person name="Kalush F."/>
            <person name="Karpen G.H."/>
            <person name="Ke Z."/>
            <person name="Kennison J.A."/>
            <person name="Ketchum K.A."/>
            <person name="Kimmel B.E."/>
            <person name="Kodira C.D."/>
            <person name="Kraft C.L."/>
            <person name="Kravitz S."/>
            <person name="Kulp D."/>
            <person name="Lai Z."/>
            <person name="Lasko P."/>
            <person name="Lei Y."/>
            <person name="Levitsky A.A."/>
            <person name="Li J.H."/>
            <person name="Li Z."/>
            <person name="Liang Y."/>
            <person name="Lin X."/>
            <person name="Liu X."/>
            <person name="Mattei B."/>
            <person name="McIntosh T.C."/>
            <person name="McLeod M.P."/>
            <person name="McPherson D."/>
            <person name="Merkulov G."/>
            <person name="Milshina N.V."/>
            <person name="Mobarry C."/>
            <person name="Morris J."/>
            <person name="Moshrefi A."/>
            <person name="Mount S.M."/>
            <person name="Moy M."/>
            <person name="Murphy B."/>
            <person name="Murphy L."/>
            <person name="Muzny D.M."/>
            <person name="Nelson D.L."/>
            <person name="Nelson D.R."/>
            <person name="Nelson K.A."/>
            <person name="Nixon K."/>
            <person name="Nusskern D.R."/>
            <person name="Pacleb J.M."/>
            <person name="Palazzolo M."/>
            <person name="Pittman G.S."/>
            <person name="Pan S."/>
            <person name="Pollard J."/>
            <person name="Puri V."/>
            <person name="Reese M.G."/>
            <person name="Reinert K."/>
            <person name="Remington K."/>
            <person name="Saunders R.D.C."/>
            <person name="Scheeler F."/>
            <person name="Shen H."/>
            <person name="Shue B.C."/>
            <person name="Siden-Kiamos I."/>
            <person name="Simpson M."/>
            <person name="Skupski M.P."/>
            <person name="Smith T.J."/>
            <person name="Spier E."/>
            <person name="Spradling A.C."/>
            <person name="Stapleton M."/>
            <person name="Strong R."/>
            <person name="Sun E."/>
            <person name="Svirskas R."/>
            <person name="Tector C."/>
            <person name="Turner R."/>
            <person name="Venter E."/>
            <person name="Wang A.H."/>
            <person name="Wang X."/>
            <person name="Wang Z.-Y."/>
            <person name="Wassarman D.A."/>
            <person name="Weinstock G.M."/>
            <person name="Weissenbach J."/>
            <person name="Williams S.M."/>
            <person name="Woodage T."/>
            <person name="Worley K.C."/>
            <person name="Wu D."/>
            <person name="Yang S."/>
            <person name="Yao Q.A."/>
            <person name="Ye J."/>
            <person name="Yeh R.-F."/>
            <person name="Zaveri J.S."/>
            <person name="Zhan M."/>
            <person name="Zhang G."/>
            <person name="Zhao Q."/>
            <person name="Zheng L."/>
            <person name="Zheng X.H."/>
            <person name="Zhong F.N."/>
            <person name="Zhong W."/>
            <person name="Zhou X."/>
            <person name="Zhu S.C."/>
            <person name="Zhu X."/>
            <person name="Smith H.O."/>
            <person name="Gibbs R.A."/>
            <person name="Myers E.W."/>
            <person name="Rubin G.M."/>
            <person name="Venter J.C."/>
        </authorList>
    </citation>
    <scope>NUCLEOTIDE SEQUENCE [LARGE SCALE GENOMIC DNA]</scope>
    <source>
        <strain>Berkeley</strain>
    </source>
</reference>
<reference key="2">
    <citation type="journal article" date="2002" name="Genome Biol.">
        <title>Annotation of the Drosophila melanogaster euchromatic genome: a systematic review.</title>
        <authorList>
            <person name="Misra S."/>
            <person name="Crosby M.A."/>
            <person name="Mungall C.J."/>
            <person name="Matthews B.B."/>
            <person name="Campbell K.S."/>
            <person name="Hradecky P."/>
            <person name="Huang Y."/>
            <person name="Kaminker J.S."/>
            <person name="Millburn G.H."/>
            <person name="Prochnik S.E."/>
            <person name="Smith C.D."/>
            <person name="Tupy J.L."/>
            <person name="Whitfield E.J."/>
            <person name="Bayraktaroglu L."/>
            <person name="Berman B.P."/>
            <person name="Bettencourt B.R."/>
            <person name="Celniker S.E."/>
            <person name="de Grey A.D.N.J."/>
            <person name="Drysdale R.A."/>
            <person name="Harris N.L."/>
            <person name="Richter J."/>
            <person name="Russo S."/>
            <person name="Schroeder A.J."/>
            <person name="Shu S.Q."/>
            <person name="Stapleton M."/>
            <person name="Yamada C."/>
            <person name="Ashburner M."/>
            <person name="Gelbart W.M."/>
            <person name="Rubin G.M."/>
            <person name="Lewis S.E."/>
        </authorList>
    </citation>
    <scope>GENOME REANNOTATION</scope>
    <source>
        <strain>Berkeley</strain>
    </source>
</reference>
<reference key="3">
    <citation type="journal article" date="2002" name="Genome Biol.">
        <title>A Drosophila full-length cDNA resource.</title>
        <authorList>
            <person name="Stapleton M."/>
            <person name="Carlson J.W."/>
            <person name="Brokstein P."/>
            <person name="Yu C."/>
            <person name="Champe M."/>
            <person name="George R.A."/>
            <person name="Guarin H."/>
            <person name="Kronmiller B."/>
            <person name="Pacleb J.M."/>
            <person name="Park S."/>
            <person name="Wan K.H."/>
            <person name="Rubin G.M."/>
            <person name="Celniker S.E."/>
        </authorList>
    </citation>
    <scope>NUCLEOTIDE SEQUENCE [LARGE SCALE MRNA]</scope>
    <source>
        <strain>Berkeley</strain>
        <tissue>Embryo</tissue>
    </source>
</reference>
<name>TIM14_DROME</name>
<gene>
    <name type="primary">Tim14</name>
    <name type="ORF">CG7394</name>
</gene>
<keyword id="KW-0143">Chaperone</keyword>
<keyword id="KW-0472">Membrane</keyword>
<keyword id="KW-0496">Mitochondrion</keyword>
<keyword id="KW-0999">Mitochondrion inner membrane</keyword>
<keyword id="KW-0653">Protein transport</keyword>
<keyword id="KW-1185">Reference proteome</keyword>
<keyword id="KW-0811">Translocation</keyword>
<keyword id="KW-0812">Transmembrane</keyword>
<keyword id="KW-1133">Transmembrane helix</keyword>
<keyword id="KW-0813">Transport</keyword>
<evidence type="ECO:0000250" key="1"/>
<evidence type="ECO:0000255" key="2"/>
<evidence type="ECO:0000255" key="3">
    <source>
        <dbReference type="PROSITE-ProRule" id="PRU00286"/>
    </source>
</evidence>
<evidence type="ECO:0000305" key="4"/>
<dbReference type="EMBL" id="AE014296">
    <property type="protein sequence ID" value="AAF50050.2"/>
    <property type="molecule type" value="Genomic_DNA"/>
</dbReference>
<dbReference type="EMBL" id="AY071438">
    <property type="protein sequence ID" value="AAL49060.1"/>
    <property type="molecule type" value="mRNA"/>
</dbReference>
<dbReference type="RefSeq" id="NP_001246717.1">
    <property type="nucleotide sequence ID" value="NM_001259788.2"/>
</dbReference>
<dbReference type="RefSeq" id="NP_001261714.1">
    <property type="nucleotide sequence ID" value="NM_001274785.1"/>
</dbReference>
<dbReference type="RefSeq" id="NP_648475.1">
    <property type="nucleotide sequence ID" value="NM_140218.4"/>
</dbReference>
<dbReference type="SMR" id="Q9VTJ8"/>
<dbReference type="FunCoup" id="Q9VTJ8">
    <property type="interactions" value="1071"/>
</dbReference>
<dbReference type="IntAct" id="Q9VTJ8">
    <property type="interactions" value="4"/>
</dbReference>
<dbReference type="STRING" id="7227.FBpp0288463"/>
<dbReference type="PaxDb" id="7227-FBpp0288463"/>
<dbReference type="DNASU" id="39294"/>
<dbReference type="EnsemblMetazoa" id="FBtr0076098">
    <property type="protein sequence ID" value="FBpp0075829"/>
    <property type="gene ID" value="FBgn0036173"/>
</dbReference>
<dbReference type="EnsemblMetazoa" id="FBtr0305648">
    <property type="protein sequence ID" value="FBpp0296928"/>
    <property type="gene ID" value="FBgn0036173"/>
</dbReference>
<dbReference type="EnsemblMetazoa" id="FBtr0333215">
    <property type="protein sequence ID" value="FBpp0305417"/>
    <property type="gene ID" value="FBgn0036173"/>
</dbReference>
<dbReference type="GeneID" id="39294"/>
<dbReference type="KEGG" id="dme:Dmel_CG7394"/>
<dbReference type="UCSC" id="CG7394-RA">
    <property type="organism name" value="d. melanogaster"/>
</dbReference>
<dbReference type="AGR" id="FB:FBgn0036173"/>
<dbReference type="FlyBase" id="FBgn0036173">
    <property type="gene designation" value="CG7394"/>
</dbReference>
<dbReference type="VEuPathDB" id="VectorBase:FBgn0036173"/>
<dbReference type="eggNOG" id="KOG0723">
    <property type="taxonomic scope" value="Eukaryota"/>
</dbReference>
<dbReference type="GeneTree" id="ENSGT00940000171836"/>
<dbReference type="HOGENOM" id="CLU_017633_13_3_1"/>
<dbReference type="InParanoid" id="Q9VTJ8"/>
<dbReference type="OrthoDB" id="240298at2759"/>
<dbReference type="BioGRID-ORCS" id="39294">
    <property type="hits" value="1 hit in 3 CRISPR screens"/>
</dbReference>
<dbReference type="GenomeRNAi" id="39294"/>
<dbReference type="PRO" id="PR:Q9VTJ8"/>
<dbReference type="Proteomes" id="UP000000803">
    <property type="component" value="Chromosome 3L"/>
</dbReference>
<dbReference type="Bgee" id="FBgn0036173">
    <property type="expression patterns" value="Expressed in adult Malpighian tubule (Drosophila) and 175 other cell types or tissues"/>
</dbReference>
<dbReference type="ExpressionAtlas" id="Q9VTJ8">
    <property type="expression patterns" value="baseline and differential"/>
</dbReference>
<dbReference type="GO" id="GO:0001405">
    <property type="term" value="C:PAM complex, Tim23 associated import motor"/>
    <property type="evidence" value="ECO:0000250"/>
    <property type="project" value="UniProtKB"/>
</dbReference>
<dbReference type="GO" id="GO:0005744">
    <property type="term" value="C:TIM23 mitochondrial import inner membrane translocase complex"/>
    <property type="evidence" value="ECO:0000250"/>
    <property type="project" value="UniProtKB"/>
</dbReference>
<dbReference type="GO" id="GO:0001671">
    <property type="term" value="F:ATPase activator activity"/>
    <property type="evidence" value="ECO:0000250"/>
    <property type="project" value="UniProtKB"/>
</dbReference>
<dbReference type="GO" id="GO:0030150">
    <property type="term" value="P:protein import into mitochondrial matrix"/>
    <property type="evidence" value="ECO:0000250"/>
    <property type="project" value="UniProtKB"/>
</dbReference>
<dbReference type="CDD" id="cd06257">
    <property type="entry name" value="DnaJ"/>
    <property type="match status" value="1"/>
</dbReference>
<dbReference type="FunFam" id="1.10.287.110:FF:000001">
    <property type="entry name" value="Import inner membrane translocase subunit tim14"/>
    <property type="match status" value="1"/>
</dbReference>
<dbReference type="Gene3D" id="1.10.287.110">
    <property type="entry name" value="DnaJ domain"/>
    <property type="match status" value="1"/>
</dbReference>
<dbReference type="InterPro" id="IPR001623">
    <property type="entry name" value="DnaJ_domain"/>
</dbReference>
<dbReference type="InterPro" id="IPR036869">
    <property type="entry name" value="J_dom_sf"/>
</dbReference>
<dbReference type="PANTHER" id="PTHR12763">
    <property type="match status" value="1"/>
</dbReference>
<dbReference type="PANTHER" id="PTHR12763:SF28">
    <property type="entry name" value="GEO10507P1-RELATED"/>
    <property type="match status" value="1"/>
</dbReference>
<dbReference type="Pfam" id="PF00226">
    <property type="entry name" value="DnaJ"/>
    <property type="match status" value="1"/>
</dbReference>
<dbReference type="SMART" id="SM00271">
    <property type="entry name" value="DnaJ"/>
    <property type="match status" value="1"/>
</dbReference>
<dbReference type="SUPFAM" id="SSF46565">
    <property type="entry name" value="Chaperone J-domain"/>
    <property type="match status" value="1"/>
</dbReference>
<dbReference type="PROSITE" id="PS50076">
    <property type="entry name" value="DNAJ_2"/>
    <property type="match status" value="1"/>
</dbReference>
<sequence length="118" mass="12868">MASSVILAGLSVAAVGFAGKHLMRRMPQMTTKFNEALKNLPKYDAESMAASKYYKGGFDPKMNKREASLILGVSPSASKIKIKDAHKKIMLLNHPDRGGSPYLAAKINEAKDFLDKAK</sequence>
<protein>
    <recommendedName>
        <fullName>Mitochondrial import inner membrane translocase subunit TIM14</fullName>
    </recommendedName>
</protein>
<accession>Q9VTJ8</accession>
<accession>Q8SYM8</accession>
<comment type="function">
    <text evidence="1">Probable component of the PAM complex, a complex required for the translocation of transit peptide-containing proteins from the inner membrane into the mitochondrial matrix in an ATP-dependent manner. May act as a co-chaperone that stimulate the ATP-dependent activity (By similarity).</text>
</comment>
<comment type="subunit">
    <text evidence="1">Probable component of the PAM complex at least composed of a mitochondrial HSP70 protein, Roe1, TIM44, blp/TIM16 and TIM14.</text>
</comment>
<comment type="subcellular location">
    <subcellularLocation>
        <location evidence="1">Mitochondrion inner membrane</location>
        <topology evidence="1">Single-pass membrane protein</topology>
    </subcellularLocation>
</comment>
<comment type="similarity">
    <text evidence="4">Belongs to the TIM14 family.</text>
</comment>
<organism>
    <name type="scientific">Drosophila melanogaster</name>
    <name type="common">Fruit fly</name>
    <dbReference type="NCBI Taxonomy" id="7227"/>
    <lineage>
        <taxon>Eukaryota</taxon>
        <taxon>Metazoa</taxon>
        <taxon>Ecdysozoa</taxon>
        <taxon>Arthropoda</taxon>
        <taxon>Hexapoda</taxon>
        <taxon>Insecta</taxon>
        <taxon>Pterygota</taxon>
        <taxon>Neoptera</taxon>
        <taxon>Endopterygota</taxon>
        <taxon>Diptera</taxon>
        <taxon>Brachycera</taxon>
        <taxon>Muscomorpha</taxon>
        <taxon>Ephydroidea</taxon>
        <taxon>Drosophilidae</taxon>
        <taxon>Drosophila</taxon>
        <taxon>Sophophora</taxon>
    </lineage>
</organism>